<reference key="1">
    <citation type="submission" date="2001-04" db="EMBL/GenBank/DDBJ databases">
        <authorList>
            <person name="Huang Y."/>
            <person name="Zhou X.M."/>
            <person name="Zhang P.P."/>
            <person name="Jiang H.Q."/>
            <person name="Qin W.X."/>
            <person name="Zhao X.T."/>
            <person name="Wan D.F."/>
            <person name="Gu J.R."/>
        </authorList>
    </citation>
    <scope>NUCLEOTIDE SEQUENCE [LARGE SCALE MRNA]</scope>
</reference>
<reference key="2">
    <citation type="journal article" date="2004" name="Nat. Genet.">
        <title>Complete sequencing and characterization of 21,243 full-length human cDNAs.</title>
        <authorList>
            <person name="Ota T."/>
            <person name="Suzuki Y."/>
            <person name="Nishikawa T."/>
            <person name="Otsuki T."/>
            <person name="Sugiyama T."/>
            <person name="Irie R."/>
            <person name="Wakamatsu A."/>
            <person name="Hayashi K."/>
            <person name="Sato H."/>
            <person name="Nagai K."/>
            <person name="Kimura K."/>
            <person name="Makita H."/>
            <person name="Sekine M."/>
            <person name="Obayashi M."/>
            <person name="Nishi T."/>
            <person name="Shibahara T."/>
            <person name="Tanaka T."/>
            <person name="Ishii S."/>
            <person name="Yamamoto J."/>
            <person name="Saito K."/>
            <person name="Kawai Y."/>
            <person name="Isono Y."/>
            <person name="Nakamura Y."/>
            <person name="Nagahari K."/>
            <person name="Murakami K."/>
            <person name="Yasuda T."/>
            <person name="Iwayanagi T."/>
            <person name="Wagatsuma M."/>
            <person name="Shiratori A."/>
            <person name="Sudo H."/>
            <person name="Hosoiri T."/>
            <person name="Kaku Y."/>
            <person name="Kodaira H."/>
            <person name="Kondo H."/>
            <person name="Sugawara M."/>
            <person name="Takahashi M."/>
            <person name="Kanda K."/>
            <person name="Yokoi T."/>
            <person name="Furuya T."/>
            <person name="Kikkawa E."/>
            <person name="Omura Y."/>
            <person name="Abe K."/>
            <person name="Kamihara K."/>
            <person name="Katsuta N."/>
            <person name="Sato K."/>
            <person name="Tanikawa M."/>
            <person name="Yamazaki M."/>
            <person name="Ninomiya K."/>
            <person name="Ishibashi T."/>
            <person name="Yamashita H."/>
            <person name="Murakawa K."/>
            <person name="Fujimori K."/>
            <person name="Tanai H."/>
            <person name="Kimata M."/>
            <person name="Watanabe M."/>
            <person name="Hiraoka S."/>
            <person name="Chiba Y."/>
            <person name="Ishida S."/>
            <person name="Ono Y."/>
            <person name="Takiguchi S."/>
            <person name="Watanabe S."/>
            <person name="Yosida M."/>
            <person name="Hotuta T."/>
            <person name="Kusano J."/>
            <person name="Kanehori K."/>
            <person name="Takahashi-Fujii A."/>
            <person name="Hara H."/>
            <person name="Tanase T.-O."/>
            <person name="Nomura Y."/>
            <person name="Togiya S."/>
            <person name="Komai F."/>
            <person name="Hara R."/>
            <person name="Takeuchi K."/>
            <person name="Arita M."/>
            <person name="Imose N."/>
            <person name="Musashino K."/>
            <person name="Yuuki H."/>
            <person name="Oshima A."/>
            <person name="Sasaki N."/>
            <person name="Aotsuka S."/>
            <person name="Yoshikawa Y."/>
            <person name="Matsunawa H."/>
            <person name="Ichihara T."/>
            <person name="Shiohata N."/>
            <person name="Sano S."/>
            <person name="Moriya S."/>
            <person name="Momiyama H."/>
            <person name="Satoh N."/>
            <person name="Takami S."/>
            <person name="Terashima Y."/>
            <person name="Suzuki O."/>
            <person name="Nakagawa S."/>
            <person name="Senoh A."/>
            <person name="Mizoguchi H."/>
            <person name="Goto Y."/>
            <person name="Shimizu F."/>
            <person name="Wakebe H."/>
            <person name="Hishigaki H."/>
            <person name="Watanabe T."/>
            <person name="Sugiyama A."/>
            <person name="Takemoto M."/>
            <person name="Kawakami B."/>
            <person name="Yamazaki M."/>
            <person name="Watanabe K."/>
            <person name="Kumagai A."/>
            <person name="Itakura S."/>
            <person name="Fukuzumi Y."/>
            <person name="Fujimori Y."/>
            <person name="Komiyama M."/>
            <person name="Tashiro H."/>
            <person name="Tanigami A."/>
            <person name="Fujiwara T."/>
            <person name="Ono T."/>
            <person name="Yamada K."/>
            <person name="Fujii Y."/>
            <person name="Ozaki K."/>
            <person name="Hirao M."/>
            <person name="Ohmori Y."/>
            <person name="Kawabata A."/>
            <person name="Hikiji T."/>
            <person name="Kobatake N."/>
            <person name="Inagaki H."/>
            <person name="Ikema Y."/>
            <person name="Okamoto S."/>
            <person name="Okitani R."/>
            <person name="Kawakami T."/>
            <person name="Noguchi S."/>
            <person name="Itoh T."/>
            <person name="Shigeta K."/>
            <person name="Senba T."/>
            <person name="Matsumura K."/>
            <person name="Nakajima Y."/>
            <person name="Mizuno T."/>
            <person name="Morinaga M."/>
            <person name="Sasaki M."/>
            <person name="Togashi T."/>
            <person name="Oyama M."/>
            <person name="Hata H."/>
            <person name="Watanabe M."/>
            <person name="Komatsu T."/>
            <person name="Mizushima-Sugano J."/>
            <person name="Satoh T."/>
            <person name="Shirai Y."/>
            <person name="Takahashi Y."/>
            <person name="Nakagawa K."/>
            <person name="Okumura K."/>
            <person name="Nagase T."/>
            <person name="Nomura N."/>
            <person name="Kikuchi H."/>
            <person name="Masuho Y."/>
            <person name="Yamashita R."/>
            <person name="Nakai K."/>
            <person name="Yada T."/>
            <person name="Nakamura Y."/>
            <person name="Ohara O."/>
            <person name="Isogai T."/>
            <person name="Sugano S."/>
        </authorList>
    </citation>
    <scope>NUCLEOTIDE SEQUENCE [LARGE SCALE MRNA]</scope>
    <source>
        <tissue>Brain</tissue>
    </source>
</reference>
<reference key="3">
    <citation type="journal article" date="2007" name="BMC Genomics">
        <title>The full-ORF clone resource of the German cDNA consortium.</title>
        <authorList>
            <person name="Bechtel S."/>
            <person name="Rosenfelder H."/>
            <person name="Duda A."/>
            <person name="Schmidt C.P."/>
            <person name="Ernst U."/>
            <person name="Wellenreuther R."/>
            <person name="Mehrle A."/>
            <person name="Schuster C."/>
            <person name="Bahr A."/>
            <person name="Bloecker H."/>
            <person name="Heubner D."/>
            <person name="Hoerlein A."/>
            <person name="Michel G."/>
            <person name="Wedler H."/>
            <person name="Koehrer K."/>
            <person name="Ottenwaelder B."/>
            <person name="Poustka A."/>
            <person name="Wiemann S."/>
            <person name="Schupp I."/>
        </authorList>
    </citation>
    <scope>NUCLEOTIDE SEQUENCE [LARGE SCALE MRNA]</scope>
    <source>
        <tissue>Lymph node</tissue>
        <tissue>Rectum tumor</tissue>
    </source>
</reference>
<reference key="4">
    <citation type="journal article" date="2005" name="Nature">
        <title>The DNA sequence of the human X chromosome.</title>
        <authorList>
            <person name="Ross M.T."/>
            <person name="Grafham D.V."/>
            <person name="Coffey A.J."/>
            <person name="Scherer S."/>
            <person name="McLay K."/>
            <person name="Muzny D."/>
            <person name="Platzer M."/>
            <person name="Howell G.R."/>
            <person name="Burrows C."/>
            <person name="Bird C.P."/>
            <person name="Frankish A."/>
            <person name="Lovell F.L."/>
            <person name="Howe K.L."/>
            <person name="Ashurst J.L."/>
            <person name="Fulton R.S."/>
            <person name="Sudbrak R."/>
            <person name="Wen G."/>
            <person name="Jones M.C."/>
            <person name="Hurles M.E."/>
            <person name="Andrews T.D."/>
            <person name="Scott C.E."/>
            <person name="Searle S."/>
            <person name="Ramser J."/>
            <person name="Whittaker A."/>
            <person name="Deadman R."/>
            <person name="Carter N.P."/>
            <person name="Hunt S.E."/>
            <person name="Chen R."/>
            <person name="Cree A."/>
            <person name="Gunaratne P."/>
            <person name="Havlak P."/>
            <person name="Hodgson A."/>
            <person name="Metzker M.L."/>
            <person name="Richards S."/>
            <person name="Scott G."/>
            <person name="Steffen D."/>
            <person name="Sodergren E."/>
            <person name="Wheeler D.A."/>
            <person name="Worley K.C."/>
            <person name="Ainscough R."/>
            <person name="Ambrose K.D."/>
            <person name="Ansari-Lari M.A."/>
            <person name="Aradhya S."/>
            <person name="Ashwell R.I."/>
            <person name="Babbage A.K."/>
            <person name="Bagguley C.L."/>
            <person name="Ballabio A."/>
            <person name="Banerjee R."/>
            <person name="Barker G.E."/>
            <person name="Barlow K.F."/>
            <person name="Barrett I.P."/>
            <person name="Bates K.N."/>
            <person name="Beare D.M."/>
            <person name="Beasley H."/>
            <person name="Beasley O."/>
            <person name="Beck A."/>
            <person name="Bethel G."/>
            <person name="Blechschmidt K."/>
            <person name="Brady N."/>
            <person name="Bray-Allen S."/>
            <person name="Bridgeman A.M."/>
            <person name="Brown A.J."/>
            <person name="Brown M.J."/>
            <person name="Bonnin D."/>
            <person name="Bruford E.A."/>
            <person name="Buhay C."/>
            <person name="Burch P."/>
            <person name="Burford D."/>
            <person name="Burgess J."/>
            <person name="Burrill W."/>
            <person name="Burton J."/>
            <person name="Bye J.M."/>
            <person name="Carder C."/>
            <person name="Carrel L."/>
            <person name="Chako J."/>
            <person name="Chapman J.C."/>
            <person name="Chavez D."/>
            <person name="Chen E."/>
            <person name="Chen G."/>
            <person name="Chen Y."/>
            <person name="Chen Z."/>
            <person name="Chinault C."/>
            <person name="Ciccodicola A."/>
            <person name="Clark S.Y."/>
            <person name="Clarke G."/>
            <person name="Clee C.M."/>
            <person name="Clegg S."/>
            <person name="Clerc-Blankenburg K."/>
            <person name="Clifford K."/>
            <person name="Cobley V."/>
            <person name="Cole C.G."/>
            <person name="Conquer J.S."/>
            <person name="Corby N."/>
            <person name="Connor R.E."/>
            <person name="David R."/>
            <person name="Davies J."/>
            <person name="Davis C."/>
            <person name="Davis J."/>
            <person name="Delgado O."/>
            <person name="Deshazo D."/>
            <person name="Dhami P."/>
            <person name="Ding Y."/>
            <person name="Dinh H."/>
            <person name="Dodsworth S."/>
            <person name="Draper H."/>
            <person name="Dugan-Rocha S."/>
            <person name="Dunham A."/>
            <person name="Dunn M."/>
            <person name="Durbin K.J."/>
            <person name="Dutta I."/>
            <person name="Eades T."/>
            <person name="Ellwood M."/>
            <person name="Emery-Cohen A."/>
            <person name="Errington H."/>
            <person name="Evans K.L."/>
            <person name="Faulkner L."/>
            <person name="Francis F."/>
            <person name="Frankland J."/>
            <person name="Fraser A.E."/>
            <person name="Galgoczy P."/>
            <person name="Gilbert J."/>
            <person name="Gill R."/>
            <person name="Gloeckner G."/>
            <person name="Gregory S.G."/>
            <person name="Gribble S."/>
            <person name="Griffiths C."/>
            <person name="Grocock R."/>
            <person name="Gu Y."/>
            <person name="Gwilliam R."/>
            <person name="Hamilton C."/>
            <person name="Hart E.A."/>
            <person name="Hawes A."/>
            <person name="Heath P.D."/>
            <person name="Heitmann K."/>
            <person name="Hennig S."/>
            <person name="Hernandez J."/>
            <person name="Hinzmann B."/>
            <person name="Ho S."/>
            <person name="Hoffs M."/>
            <person name="Howden P.J."/>
            <person name="Huckle E.J."/>
            <person name="Hume J."/>
            <person name="Hunt P.J."/>
            <person name="Hunt A.R."/>
            <person name="Isherwood J."/>
            <person name="Jacob L."/>
            <person name="Johnson D."/>
            <person name="Jones S."/>
            <person name="de Jong P.J."/>
            <person name="Joseph S.S."/>
            <person name="Keenan S."/>
            <person name="Kelly S."/>
            <person name="Kershaw J.K."/>
            <person name="Khan Z."/>
            <person name="Kioschis P."/>
            <person name="Klages S."/>
            <person name="Knights A.J."/>
            <person name="Kosiura A."/>
            <person name="Kovar-Smith C."/>
            <person name="Laird G.K."/>
            <person name="Langford C."/>
            <person name="Lawlor S."/>
            <person name="Leversha M."/>
            <person name="Lewis L."/>
            <person name="Liu W."/>
            <person name="Lloyd C."/>
            <person name="Lloyd D.M."/>
            <person name="Loulseged H."/>
            <person name="Loveland J.E."/>
            <person name="Lovell J.D."/>
            <person name="Lozado R."/>
            <person name="Lu J."/>
            <person name="Lyne R."/>
            <person name="Ma J."/>
            <person name="Maheshwari M."/>
            <person name="Matthews L.H."/>
            <person name="McDowall J."/>
            <person name="McLaren S."/>
            <person name="McMurray A."/>
            <person name="Meidl P."/>
            <person name="Meitinger T."/>
            <person name="Milne S."/>
            <person name="Miner G."/>
            <person name="Mistry S.L."/>
            <person name="Morgan M."/>
            <person name="Morris S."/>
            <person name="Mueller I."/>
            <person name="Mullikin J.C."/>
            <person name="Nguyen N."/>
            <person name="Nordsiek G."/>
            <person name="Nyakatura G."/>
            <person name="O'dell C.N."/>
            <person name="Okwuonu G."/>
            <person name="Palmer S."/>
            <person name="Pandian R."/>
            <person name="Parker D."/>
            <person name="Parrish J."/>
            <person name="Pasternak S."/>
            <person name="Patel D."/>
            <person name="Pearce A.V."/>
            <person name="Pearson D.M."/>
            <person name="Pelan S.E."/>
            <person name="Perez L."/>
            <person name="Porter K.M."/>
            <person name="Ramsey Y."/>
            <person name="Reichwald K."/>
            <person name="Rhodes S."/>
            <person name="Ridler K.A."/>
            <person name="Schlessinger D."/>
            <person name="Schueler M.G."/>
            <person name="Sehra H.K."/>
            <person name="Shaw-Smith C."/>
            <person name="Shen H."/>
            <person name="Sheridan E.M."/>
            <person name="Shownkeen R."/>
            <person name="Skuce C.D."/>
            <person name="Smith M.L."/>
            <person name="Sotheran E.C."/>
            <person name="Steingruber H.E."/>
            <person name="Steward C.A."/>
            <person name="Storey R."/>
            <person name="Swann R.M."/>
            <person name="Swarbreck D."/>
            <person name="Tabor P.E."/>
            <person name="Taudien S."/>
            <person name="Taylor T."/>
            <person name="Teague B."/>
            <person name="Thomas K."/>
            <person name="Thorpe A."/>
            <person name="Timms K."/>
            <person name="Tracey A."/>
            <person name="Trevanion S."/>
            <person name="Tromans A.C."/>
            <person name="d'Urso M."/>
            <person name="Verduzco D."/>
            <person name="Villasana D."/>
            <person name="Waldron L."/>
            <person name="Wall M."/>
            <person name="Wang Q."/>
            <person name="Warren J."/>
            <person name="Warry G.L."/>
            <person name="Wei X."/>
            <person name="West A."/>
            <person name="Whitehead S.L."/>
            <person name="Whiteley M.N."/>
            <person name="Wilkinson J.E."/>
            <person name="Willey D.L."/>
            <person name="Williams G."/>
            <person name="Williams L."/>
            <person name="Williamson A."/>
            <person name="Williamson H."/>
            <person name="Wilming L."/>
            <person name="Woodmansey R.L."/>
            <person name="Wray P.W."/>
            <person name="Yen J."/>
            <person name="Zhang J."/>
            <person name="Zhou J."/>
            <person name="Zoghbi H."/>
            <person name="Zorilla S."/>
            <person name="Buck D."/>
            <person name="Reinhardt R."/>
            <person name="Poustka A."/>
            <person name="Rosenthal A."/>
            <person name="Lehrach H."/>
            <person name="Meindl A."/>
            <person name="Minx P.J."/>
            <person name="Hillier L.W."/>
            <person name="Willard H.F."/>
            <person name="Wilson R.K."/>
            <person name="Waterston R.H."/>
            <person name="Rice C.M."/>
            <person name="Vaudin M."/>
            <person name="Coulson A."/>
            <person name="Nelson D.L."/>
            <person name="Weinstock G."/>
            <person name="Sulston J.E."/>
            <person name="Durbin R.M."/>
            <person name="Hubbard T."/>
            <person name="Gibbs R.A."/>
            <person name="Beck S."/>
            <person name="Rogers J."/>
            <person name="Bentley D.R."/>
        </authorList>
    </citation>
    <scope>NUCLEOTIDE SEQUENCE [LARGE SCALE GENOMIC DNA]</scope>
</reference>
<reference key="5">
    <citation type="submission" date="2005-09" db="EMBL/GenBank/DDBJ databases">
        <authorList>
            <person name="Mural R.J."/>
            <person name="Istrail S."/>
            <person name="Sutton G.G."/>
            <person name="Florea L."/>
            <person name="Halpern A.L."/>
            <person name="Mobarry C.M."/>
            <person name="Lippert R."/>
            <person name="Walenz B."/>
            <person name="Shatkay H."/>
            <person name="Dew I."/>
            <person name="Miller J.R."/>
            <person name="Flanigan M.J."/>
            <person name="Edwards N.J."/>
            <person name="Bolanos R."/>
            <person name="Fasulo D."/>
            <person name="Halldorsson B.V."/>
            <person name="Hannenhalli S."/>
            <person name="Turner R."/>
            <person name="Yooseph S."/>
            <person name="Lu F."/>
            <person name="Nusskern D.R."/>
            <person name="Shue B.C."/>
            <person name="Zheng X.H."/>
            <person name="Zhong F."/>
            <person name="Delcher A.L."/>
            <person name="Huson D.H."/>
            <person name="Kravitz S.A."/>
            <person name="Mouchard L."/>
            <person name="Reinert K."/>
            <person name="Remington K.A."/>
            <person name="Clark A.G."/>
            <person name="Waterman M.S."/>
            <person name="Eichler E.E."/>
            <person name="Adams M.D."/>
            <person name="Hunkapiller M.W."/>
            <person name="Myers E.W."/>
            <person name="Venter J.C."/>
        </authorList>
    </citation>
    <scope>NUCLEOTIDE SEQUENCE [LARGE SCALE GENOMIC DNA]</scope>
</reference>
<reference key="6">
    <citation type="journal article" date="2004" name="Genome Res.">
        <title>The status, quality, and expansion of the NIH full-length cDNA project: the Mammalian Gene Collection (MGC).</title>
        <authorList>
            <consortium name="The MGC Project Team"/>
        </authorList>
    </citation>
    <scope>NUCLEOTIDE SEQUENCE [LARGE SCALE MRNA]</scope>
    <source>
        <tissue>Brain</tissue>
    </source>
</reference>
<reference key="7">
    <citation type="submission" date="1998-09" db="EMBL/GenBank/DDBJ databases">
        <title>Functional prediction of the coding sequences of 50 new genes deduced by analysis of cDNA clones from human fetal liver.</title>
        <authorList>
            <person name="Yu Y."/>
            <person name="Zhang C."/>
            <person name="Luo L."/>
            <person name="Ouyang S."/>
            <person name="Zhang S."/>
            <person name="Li W."/>
            <person name="Wu J."/>
            <person name="Zhou S."/>
            <person name="Liu M."/>
            <person name="He F."/>
        </authorList>
    </citation>
    <scope>NUCLEOTIDE SEQUENCE [LARGE SCALE MRNA] OF 21-213</scope>
    <source>
        <tissue>Fetal liver</tissue>
    </source>
</reference>
<reference key="8">
    <citation type="journal article" date="2006" name="Genes Chromosomes Cancer">
        <title>Identification of a new cancer/testis gene family, CT47, among expressed multicopy genes on the human X chromosome.</title>
        <authorList>
            <person name="Chen Y.-T."/>
            <person name="Iseli C."/>
            <person name="Venditti C.A."/>
            <person name="Old L.J."/>
            <person name="Simpson A.J.G."/>
            <person name="Jongeneel C.V."/>
        </authorList>
    </citation>
    <scope>IDENTIFICATION</scope>
</reference>
<reference key="9">
    <citation type="journal article" date="2012" name="Proc. Natl. Acad. Sci. U.S.A.">
        <title>N-terminal acetylome analyses and functional insights of the N-terminal acetyltransferase NatB.</title>
        <authorList>
            <person name="Van Damme P."/>
            <person name="Lasa M."/>
            <person name="Polevoda B."/>
            <person name="Gazquez C."/>
            <person name="Elosegui-Artola A."/>
            <person name="Kim D.S."/>
            <person name="De Juan-Pardo E."/>
            <person name="Demeyer K."/>
            <person name="Hole K."/>
            <person name="Larrea E."/>
            <person name="Timmerman E."/>
            <person name="Prieto J."/>
            <person name="Arnesen T."/>
            <person name="Sherman F."/>
            <person name="Gevaert K."/>
            <person name="Aldabe R."/>
        </authorList>
    </citation>
    <scope>ACETYLATION [LARGE SCALE ANALYSIS] AT MET-1</scope>
    <scope>IDENTIFICATION BY MASS SPECTROMETRY [LARGE SCALE ANALYSIS]</scope>
</reference>
<reference key="10">
    <citation type="journal article" date="2013" name="J. Proteome Res.">
        <title>Toward a comprehensive characterization of a human cancer cell phosphoproteome.</title>
        <authorList>
            <person name="Zhou H."/>
            <person name="Di Palma S."/>
            <person name="Preisinger C."/>
            <person name="Peng M."/>
            <person name="Polat A.N."/>
            <person name="Heck A.J."/>
            <person name="Mohammed S."/>
        </authorList>
    </citation>
    <scope>PHOSPHORYLATION [LARGE SCALE ANALYSIS] AT SER-114</scope>
    <scope>IDENTIFICATION BY MASS SPECTROMETRY [LARGE SCALE ANALYSIS]</scope>
    <source>
        <tissue>Cervix carcinoma</tissue>
        <tissue>Erythroleukemia</tissue>
    </source>
</reference>
<organism>
    <name type="scientific">Homo sapiens</name>
    <name type="common">Human</name>
    <dbReference type="NCBI Taxonomy" id="9606"/>
    <lineage>
        <taxon>Eukaryota</taxon>
        <taxon>Metazoa</taxon>
        <taxon>Chordata</taxon>
        <taxon>Craniata</taxon>
        <taxon>Vertebrata</taxon>
        <taxon>Euteleostomi</taxon>
        <taxon>Mammalia</taxon>
        <taxon>Eutheria</taxon>
        <taxon>Euarchontoglires</taxon>
        <taxon>Primates</taxon>
        <taxon>Haplorrhini</taxon>
        <taxon>Catarrhini</taxon>
        <taxon>Hominidae</taxon>
        <taxon>Homo</taxon>
    </lineage>
</organism>
<keyword id="KW-0007">Acetylation</keyword>
<keyword id="KW-0472">Membrane</keyword>
<keyword id="KW-0597">Phosphoprotein</keyword>
<keyword id="KW-1267">Proteomics identification</keyword>
<keyword id="KW-1185">Reference proteome</keyword>
<keyword id="KW-0812">Transmembrane</keyword>
<keyword id="KW-1133">Transmembrane helix</keyword>
<evidence type="ECO:0000255" key="1"/>
<evidence type="ECO:0000256" key="2">
    <source>
        <dbReference type="SAM" id="MobiDB-lite"/>
    </source>
</evidence>
<evidence type="ECO:0000305" key="3"/>
<evidence type="ECO:0007744" key="4">
    <source>
    </source>
</evidence>
<evidence type="ECO:0007744" key="5">
    <source>
    </source>
</evidence>
<dbReference type="EMBL" id="AF370413">
    <property type="protein sequence ID" value="AAQ15249.1"/>
    <property type="molecule type" value="mRNA"/>
</dbReference>
<dbReference type="EMBL" id="AK057692">
    <property type="protein sequence ID" value="BAG51954.1"/>
    <property type="molecule type" value="mRNA"/>
</dbReference>
<dbReference type="EMBL" id="AK091598">
    <property type="protein sequence ID" value="BAG52389.1"/>
    <property type="molecule type" value="mRNA"/>
</dbReference>
<dbReference type="EMBL" id="AK092365">
    <property type="protein sequence ID" value="BAG52539.1"/>
    <property type="molecule type" value="mRNA"/>
</dbReference>
<dbReference type="EMBL" id="AK096162">
    <property type="protein sequence ID" value="BAG53221.1"/>
    <property type="molecule type" value="mRNA"/>
</dbReference>
<dbReference type="EMBL" id="AL834135">
    <property type="protein sequence ID" value="CAD38851.1"/>
    <property type="molecule type" value="mRNA"/>
</dbReference>
<dbReference type="EMBL" id="CR749619">
    <property type="protein sequence ID" value="CAH18413.1"/>
    <property type="molecule type" value="mRNA"/>
</dbReference>
<dbReference type="EMBL" id="AL807736">
    <property type="status" value="NOT_ANNOTATED_CDS"/>
    <property type="molecule type" value="Genomic_DNA"/>
</dbReference>
<dbReference type="EMBL" id="CH471283">
    <property type="protein sequence ID" value="EAW57547.1"/>
    <property type="molecule type" value="Genomic_DNA"/>
</dbReference>
<dbReference type="EMBL" id="BC000867">
    <property type="protein sequence ID" value="AAH00867.1"/>
    <property type="status" value="ALT_INIT"/>
    <property type="molecule type" value="mRNA"/>
</dbReference>
<dbReference type="EMBL" id="BC067819">
    <property type="protein sequence ID" value="AAH67819.1"/>
    <property type="molecule type" value="mRNA"/>
</dbReference>
<dbReference type="EMBL" id="AF090943">
    <property type="protein sequence ID" value="AAF24055.1"/>
    <property type="status" value="ALT_INIT"/>
    <property type="molecule type" value="mRNA"/>
</dbReference>
<dbReference type="CCDS" id="CCDS35297.1"/>
<dbReference type="CCDS" id="CCDS43957.1"/>
<dbReference type="RefSeq" id="NP_001093154.1">
    <property type="nucleotide sequence ID" value="NM_001099684.2"/>
</dbReference>
<dbReference type="RefSeq" id="NP_001229418.1">
    <property type="nucleotide sequence ID" value="NM_001242489.2"/>
</dbReference>
<dbReference type="RefSeq" id="NP_001229419.1">
    <property type="nucleotide sequence ID" value="NM_001242490.2"/>
</dbReference>
<dbReference type="RefSeq" id="NP_001229420.1">
    <property type="nucleotide sequence ID" value="NM_001242491.1"/>
</dbReference>
<dbReference type="RefSeq" id="NP_001229421.1">
    <property type="nucleotide sequence ID" value="NM_001242492.2"/>
</dbReference>
<dbReference type="RefSeq" id="NP_001229422.1">
    <property type="nucleotide sequence ID" value="NM_001242493.2"/>
</dbReference>
<dbReference type="RefSeq" id="NP_001229423.1">
    <property type="nucleotide sequence ID" value="NM_001242494.2"/>
</dbReference>
<dbReference type="RefSeq" id="NP_001229424.1">
    <property type="nucleotide sequence ID" value="NM_001242495.2"/>
</dbReference>
<dbReference type="RefSeq" id="NP_001229425.1">
    <property type="nucleotide sequence ID" value="NM_001242496.2"/>
</dbReference>
<dbReference type="RefSeq" id="NP_001229426.1">
    <property type="nucleotide sequence ID" value="NM_001242497.2"/>
</dbReference>
<dbReference type="RefSeq" id="NP_001308107.1">
    <property type="nucleotide sequence ID" value="NM_001321178.1"/>
</dbReference>
<dbReference type="RefSeq" id="NP_001308108.1">
    <property type="nucleotide sequence ID" value="NM_001321179.1"/>
</dbReference>
<dbReference type="RefSeq" id="NP_001308109.1">
    <property type="nucleotide sequence ID" value="NM_001321180.1"/>
</dbReference>
<dbReference type="RefSeq" id="NP_001308110.1">
    <property type="nucleotide sequence ID" value="NM_001321181.1"/>
</dbReference>
<dbReference type="RefSeq" id="NP_001308111.1">
    <property type="nucleotide sequence ID" value="NM_001321182.1"/>
</dbReference>
<dbReference type="RefSeq" id="NP_001308112.1">
    <property type="nucleotide sequence ID" value="NM_001321183.1"/>
</dbReference>
<dbReference type="RefSeq" id="NP_001308115.1">
    <property type="nucleotide sequence ID" value="NM_001321186.1"/>
</dbReference>
<dbReference type="RefSeq" id="NP_001308116.1">
    <property type="nucleotide sequence ID" value="NM_001321187.1"/>
</dbReference>
<dbReference type="RefSeq" id="NP_001308117.1">
    <property type="nucleotide sequence ID" value="NM_001321188.1"/>
</dbReference>
<dbReference type="RefSeq" id="NP_001363989.1">
    <property type="nucleotide sequence ID" value="NM_001377060.1"/>
</dbReference>
<dbReference type="RefSeq" id="NP_001363990.1">
    <property type="nucleotide sequence ID" value="NM_001377061.1"/>
</dbReference>
<dbReference type="RefSeq" id="NP_001363991.1">
    <property type="nucleotide sequence ID" value="NM_001377062.1"/>
</dbReference>
<dbReference type="RefSeq" id="NP_001363992.1">
    <property type="nucleotide sequence ID" value="NM_001377063.1"/>
</dbReference>
<dbReference type="RefSeq" id="NP_001374635.1">
    <property type="nucleotide sequence ID" value="NM_001387706.1"/>
</dbReference>
<dbReference type="RefSeq" id="NP_054857.2">
    <property type="nucleotide sequence ID" value="NM_014138.4"/>
</dbReference>
<dbReference type="RefSeq" id="XP_006724649.1">
    <property type="nucleotide sequence ID" value="XM_006724586.3"/>
</dbReference>
<dbReference type="RefSeq" id="XP_006724650.1">
    <property type="nucleotide sequence ID" value="XM_006724587.3"/>
</dbReference>
<dbReference type="RefSeq" id="XP_011529083.1">
    <property type="nucleotide sequence ID" value="XM_011530781.1"/>
</dbReference>
<dbReference type="RefSeq" id="XP_011529084.1">
    <property type="nucleotide sequence ID" value="XM_011530782.1"/>
</dbReference>
<dbReference type="RefSeq" id="XP_011529085.1">
    <property type="nucleotide sequence ID" value="XM_011530783.1"/>
</dbReference>
<dbReference type="RefSeq" id="XP_011529086.1">
    <property type="nucleotide sequence ID" value="XM_011530784.2"/>
</dbReference>
<dbReference type="RefSeq" id="XP_011529119.1">
    <property type="nucleotide sequence ID" value="XM_011530817.1"/>
</dbReference>
<dbReference type="RefSeq" id="XP_011529123.1">
    <property type="nucleotide sequence ID" value="XM_011530821.2"/>
</dbReference>
<dbReference type="RefSeq" id="XP_016884946.1">
    <property type="nucleotide sequence ID" value="XM_017029457.1"/>
</dbReference>
<dbReference type="RefSeq" id="XP_016884947.1">
    <property type="nucleotide sequence ID" value="XM_017029458.1"/>
</dbReference>
<dbReference type="RefSeq" id="XP_047297988.1">
    <property type="nucleotide sequence ID" value="XM_047442032.1"/>
</dbReference>
<dbReference type="RefSeq" id="XP_047297989.1">
    <property type="nucleotide sequence ID" value="XM_047442033.1"/>
</dbReference>
<dbReference type="RefSeq" id="XP_047297990.1">
    <property type="nucleotide sequence ID" value="XM_047442034.1"/>
</dbReference>
<dbReference type="RefSeq" id="XP_047297991.1">
    <property type="nucleotide sequence ID" value="XM_047442035.1"/>
</dbReference>
<dbReference type="RefSeq" id="XP_047297992.1">
    <property type="nucleotide sequence ID" value="XM_047442036.1"/>
</dbReference>
<dbReference type="RefSeq" id="XP_047297993.1">
    <property type="nucleotide sequence ID" value="XM_047442037.1"/>
</dbReference>
<dbReference type="RefSeq" id="XP_054182889.1">
    <property type="nucleotide sequence ID" value="XM_054326914.1"/>
</dbReference>
<dbReference type="RefSeq" id="XP_054182890.1">
    <property type="nucleotide sequence ID" value="XM_054326915.1"/>
</dbReference>
<dbReference type="RefSeq" id="XP_054182891.1">
    <property type="nucleotide sequence ID" value="XM_054326916.1"/>
</dbReference>
<dbReference type="RefSeq" id="XP_054182892.1">
    <property type="nucleotide sequence ID" value="XM_054326917.1"/>
</dbReference>
<dbReference type="RefSeq" id="XP_054182893.1">
    <property type="nucleotide sequence ID" value="XM_054326918.1"/>
</dbReference>
<dbReference type="RefSeq" id="XP_054182894.1">
    <property type="nucleotide sequence ID" value="XM_054326919.1"/>
</dbReference>
<dbReference type="RefSeq" id="XP_054182895.1">
    <property type="nucleotide sequence ID" value="XM_054326920.1"/>
</dbReference>
<dbReference type="BioGRID" id="118833">
    <property type="interactions" value="8"/>
</dbReference>
<dbReference type="BioGRID" id="608308">
    <property type="interactions" value="2"/>
</dbReference>
<dbReference type="FunCoup" id="Q8NDB6">
    <property type="interactions" value="29"/>
</dbReference>
<dbReference type="IntAct" id="Q8NDB6">
    <property type="interactions" value="8"/>
</dbReference>
<dbReference type="MINT" id="Q8NDB6"/>
<dbReference type="STRING" id="9606.ENSP00000469248"/>
<dbReference type="iPTMnet" id="Q8NDB6"/>
<dbReference type="PhosphoSitePlus" id="Q8NDB6"/>
<dbReference type="BioMuta" id="FAM156A"/>
<dbReference type="DMDM" id="74751217"/>
<dbReference type="jPOST" id="Q8NDB6"/>
<dbReference type="MassIVE" id="Q8NDB6"/>
<dbReference type="PaxDb" id="9606-ENSP00000469248"/>
<dbReference type="PeptideAtlas" id="Q8NDB6"/>
<dbReference type="ProteomicsDB" id="73011"/>
<dbReference type="Antibodypedia" id="43492">
    <property type="antibodies" value="26 antibodies from 9 providers"/>
</dbReference>
<dbReference type="Antibodypedia" id="72645">
    <property type="antibodies" value="77 antibodies from 12 providers"/>
</dbReference>
<dbReference type="DNASU" id="29057"/>
<dbReference type="Ensembl" id="ENST00000416841.8">
    <property type="protein sequence ID" value="ENSP00000424864.1"/>
    <property type="gene ID" value="ENSG00000179304.18"/>
</dbReference>
<dbReference type="Ensembl" id="ENST00000509613.1">
    <property type="protein sequence ID" value="ENSP00000422411.1"/>
    <property type="gene ID" value="ENSG00000179304.18"/>
</dbReference>
<dbReference type="Ensembl" id="ENST00000593751.7">
    <property type="protein sequence ID" value="ENSP00000469248.1"/>
    <property type="gene ID" value="ENSG00000179304.18"/>
</dbReference>
<dbReference type="Ensembl" id="ENST00000596733.7">
    <property type="protein sequence ID" value="ENSP00000471676.1"/>
    <property type="gene ID" value="ENSG00000268350.8"/>
</dbReference>
<dbReference type="Ensembl" id="ENST00000610625.5">
    <property type="protein sequence ID" value="ENSP00000484486.2"/>
    <property type="gene ID" value="ENSG00000268350.8"/>
</dbReference>
<dbReference type="Ensembl" id="ENST00000611661.4">
    <property type="protein sequence ID" value="ENSP00000480518.1"/>
    <property type="gene ID" value="ENSG00000268350.8"/>
</dbReference>
<dbReference type="Ensembl" id="ENST00000612083.5">
    <property type="protein sequence ID" value="ENSP00000484967.2"/>
    <property type="gene ID" value="ENSG00000268350.8"/>
</dbReference>
<dbReference type="Ensembl" id="ENST00000612846.5">
    <property type="protein sequence ID" value="ENSP00000479348.2"/>
    <property type="gene ID" value="ENSG00000268350.8"/>
</dbReference>
<dbReference type="Ensembl" id="ENST00000612915.4">
    <property type="protein sequence ID" value="ENSP00000484167.1"/>
    <property type="gene ID" value="ENSG00000268350.8"/>
</dbReference>
<dbReference type="Ensembl" id="ENST00000613284.1">
    <property type="protein sequence ID" value="ENSP00000480373.1"/>
    <property type="gene ID" value="ENSG00000268350.8"/>
</dbReference>
<dbReference type="Ensembl" id="ENST00000615092.4">
    <property type="protein sequence ID" value="ENSP00000479184.1"/>
    <property type="gene ID" value="ENSG00000268350.8"/>
</dbReference>
<dbReference type="Ensembl" id="ENST00000616419.4">
    <property type="protein sequence ID" value="ENSP00000483008.1"/>
    <property type="gene ID" value="ENSG00000179304.18"/>
</dbReference>
<dbReference type="Ensembl" id="ENST00000617970.4">
    <property type="protein sequence ID" value="ENSP00000481435.1"/>
    <property type="gene ID" value="ENSG00000268350.8"/>
</dbReference>
<dbReference type="Ensembl" id="ENST00000618601.5">
    <property type="protein sequence ID" value="ENSP00000482980.2"/>
    <property type="gene ID" value="ENSG00000268350.8"/>
</dbReference>
<dbReference type="Ensembl" id="ENST00000619373.5">
    <property type="protein sequence ID" value="ENSP00000484757.2"/>
    <property type="gene ID" value="ENSG00000268350.8"/>
</dbReference>
<dbReference type="Ensembl" id="ENST00000619518.5">
    <property type="protein sequence ID" value="ENSP00000482562.2"/>
    <property type="gene ID" value="ENSG00000268350.8"/>
</dbReference>
<dbReference type="Ensembl" id="ENST00000619586.5">
    <property type="protein sequence ID" value="ENSP00000479822.2"/>
    <property type="gene ID" value="ENSG00000268350.8"/>
</dbReference>
<dbReference type="Ensembl" id="ENST00000622197.5">
    <property type="protein sequence ID" value="ENSP00000481568.2"/>
    <property type="gene ID" value="ENSG00000268350.8"/>
</dbReference>
<dbReference type="Ensembl" id="ENST00000622323.5">
    <property type="protein sequence ID" value="ENSP00000477905.2"/>
    <property type="gene ID" value="ENSG00000268350.8"/>
</dbReference>
<dbReference type="Ensembl" id="ENST00000622447.5">
    <property type="protein sequence ID" value="ENSP00000482142.1"/>
    <property type="gene ID" value="ENSG00000268350.8"/>
</dbReference>
<dbReference type="Ensembl" id="ENST00000622732.5">
    <property type="protein sequence ID" value="ENSP00000479338.2"/>
    <property type="gene ID" value="ENSG00000268350.8"/>
</dbReference>
<dbReference type="Ensembl" id="ENST00000623782.3">
    <property type="protein sequence ID" value="ENSP00000485247.1"/>
    <property type="gene ID" value="ENSG00000268350.8"/>
</dbReference>
<dbReference type="GeneID" id="29057"/>
<dbReference type="GeneID" id="727866"/>
<dbReference type="KEGG" id="hsa:29057"/>
<dbReference type="KEGG" id="hsa:727866"/>
<dbReference type="MANE-Select" id="ENST00000416841.8">
    <property type="protein sequence ID" value="ENSP00000424864.1"/>
    <property type="RefSeq nucleotide sequence ID" value="NM_001321178.3"/>
    <property type="RefSeq protein sequence ID" value="NP_001308107.1"/>
</dbReference>
<dbReference type="MANE-Select" id="ENST00000622447.5">
    <property type="protein sequence ID" value="ENSP00000482142.1"/>
    <property type="RefSeq nucleotide sequence ID" value="NM_001387706.1"/>
    <property type="RefSeq protein sequence ID" value="NP_001374635.1"/>
</dbReference>
<dbReference type="UCSC" id="uc004dri.4">
    <property type="organism name" value="human"/>
</dbReference>
<dbReference type="AGR" id="HGNC:30114"/>
<dbReference type="AGR" id="HGNC:31962"/>
<dbReference type="CTD" id="29057"/>
<dbReference type="CTD" id="727866"/>
<dbReference type="DisGeNET" id="727866"/>
<dbReference type="GeneCards" id="FAM156A"/>
<dbReference type="GeneCards" id="FAM156B"/>
<dbReference type="HGNC" id="HGNC:30114">
    <property type="gene designation" value="FAM156A"/>
</dbReference>
<dbReference type="HGNC" id="HGNC:31962">
    <property type="gene designation" value="FAM156B"/>
</dbReference>
<dbReference type="HPA" id="ENSG00000179304">
    <property type="expression patterns" value="Low tissue specificity"/>
</dbReference>
<dbReference type="HPA" id="ENSG00000268350">
    <property type="expression patterns" value="Low tissue specificity"/>
</dbReference>
<dbReference type="neXtProt" id="NX_Q8NDB6"/>
<dbReference type="PharmGKB" id="PA162386699"/>
<dbReference type="VEuPathDB" id="HostDB:ENSG00000179304"/>
<dbReference type="VEuPathDB" id="HostDB:ENSG00000268350"/>
<dbReference type="eggNOG" id="ENOG502TAXT">
    <property type="taxonomic scope" value="Eukaryota"/>
</dbReference>
<dbReference type="GeneTree" id="ENSGT00510000049526"/>
<dbReference type="HOGENOM" id="CLU_1392967_0_0_1"/>
<dbReference type="InParanoid" id="Q8NDB6"/>
<dbReference type="OMA" id="DHMAPYP"/>
<dbReference type="OrthoDB" id="9536421at2759"/>
<dbReference type="PAN-GO" id="Q8NDB6">
    <property type="GO annotations" value="0 GO annotations based on evolutionary models"/>
</dbReference>
<dbReference type="PhylomeDB" id="Q8NDB6"/>
<dbReference type="TreeFam" id="TF338027"/>
<dbReference type="PathwayCommons" id="Q8NDB6"/>
<dbReference type="SignaLink" id="Q8NDB6"/>
<dbReference type="BioGRID-ORCS" id="29057">
    <property type="hits" value="17 hits in 655 CRISPR screens"/>
</dbReference>
<dbReference type="BioGRID-ORCS" id="727866">
    <property type="hits" value="10 hits in 620 CRISPR screens"/>
</dbReference>
<dbReference type="ChiTaRS" id="FAM156A">
    <property type="organism name" value="human"/>
</dbReference>
<dbReference type="ChiTaRS" id="FAM156B">
    <property type="organism name" value="human"/>
</dbReference>
<dbReference type="GeneWiki" id="TMEM29"/>
<dbReference type="Pharos" id="Q8NDB6">
    <property type="development level" value="Tdark"/>
</dbReference>
<dbReference type="PRO" id="PR:Q8NDB6"/>
<dbReference type="Proteomes" id="UP000005640">
    <property type="component" value="Chromosome X"/>
</dbReference>
<dbReference type="RNAct" id="Q8NDB6">
    <property type="molecule type" value="protein"/>
</dbReference>
<dbReference type="Bgee" id="ENSG00000179304">
    <property type="expression patterns" value="Expressed in pituitary gland and 95 other cell types or tissues"/>
</dbReference>
<dbReference type="ExpressionAtlas" id="Q8NDB6">
    <property type="expression patterns" value="baseline and differential"/>
</dbReference>
<dbReference type="GO" id="GO:0016020">
    <property type="term" value="C:membrane"/>
    <property type="evidence" value="ECO:0007669"/>
    <property type="project" value="UniProtKB-SubCell"/>
</dbReference>
<dbReference type="GO" id="GO:0005635">
    <property type="term" value="C:nuclear envelope"/>
    <property type="evidence" value="ECO:0000314"/>
    <property type="project" value="LIFEdb"/>
</dbReference>
<dbReference type="GO" id="GO:0035064">
    <property type="term" value="F:methylated histone binding"/>
    <property type="evidence" value="ECO:0007669"/>
    <property type="project" value="InterPro"/>
</dbReference>
<dbReference type="InterPro" id="IPR029096">
    <property type="entry name" value="Dppa3"/>
</dbReference>
<dbReference type="PANTHER" id="PTHR31577">
    <property type="entry name" value="DEVELOPMENTAL PLURIPOTENCY-ASSOCIATED PROTEIN 3-RELATED"/>
    <property type="match status" value="1"/>
</dbReference>
<dbReference type="PANTHER" id="PTHR31577:SF3">
    <property type="entry name" value="PROTEIN FAM156A_FAM156B"/>
    <property type="match status" value="1"/>
</dbReference>
<dbReference type="Pfam" id="PF15549">
    <property type="entry name" value="PGC7_Stella"/>
    <property type="match status" value="1"/>
</dbReference>
<gene>
    <name type="primary">FAM156A</name>
    <name type="synonym">TMEM29</name>
    <name type="ORF">PP12994</name>
    <name type="ORF">PRO0659</name>
</gene>
<gene>
    <name type="primary">FAM156B</name>
    <name type="synonym">TMEM29B</name>
</gene>
<accession>Q8NDB6</accession>
<accession>B3KQ92</accession>
<accession>Q5JPL2</accession>
<accession>Q5JPL3</accession>
<accession>Q5JPL4</accession>
<accession>Q5JPL5</accession>
<accession>Q5JPL6</accession>
<accession>Q68D17</accession>
<accession>Q6NVY3</accession>
<accession>Q9UI49</accession>
<sequence>MDPLQKRNPASPSKSSPMTAAETSQEGPAPSQPSYSEQPMMGLSNLSPGPGPSQAVPLPEGLLRQRYREEKTLEERRWERLEFLQRKKAFLRHVRRRHRDHMAPYAVGREARISPLGDRSQNRFRCECRYCQSHRPNLSGIPGESNRAPHPSSWETLVQGLSGLTLSLGTNQPGPLPEAALQPQETEEKRQRERQQESKIMFQRLLKQWLEEN</sequence>
<proteinExistence type="evidence at protein level"/>
<feature type="chain" id="PRO_0000244468" description="Protein FAM156A/FAM156B">
    <location>
        <begin position="1"/>
        <end position="213"/>
    </location>
</feature>
<feature type="transmembrane region" description="Helical" evidence="1">
    <location>
        <begin position="154"/>
        <end position="170"/>
    </location>
</feature>
<feature type="region of interest" description="Disordered" evidence="2">
    <location>
        <begin position="1"/>
        <end position="62"/>
    </location>
</feature>
<feature type="region of interest" description="Disordered" evidence="2">
    <location>
        <begin position="165"/>
        <end position="198"/>
    </location>
</feature>
<feature type="compositionally biased region" description="Polar residues" evidence="2">
    <location>
        <begin position="8"/>
        <end position="37"/>
    </location>
</feature>
<feature type="compositionally biased region" description="Basic and acidic residues" evidence="2">
    <location>
        <begin position="186"/>
        <end position="197"/>
    </location>
</feature>
<feature type="modified residue" description="N-acetylmethionine" evidence="4">
    <location>
        <position position="1"/>
    </location>
</feature>
<feature type="modified residue" description="Phosphoserine" evidence="5">
    <location>
        <position position="114"/>
    </location>
</feature>
<feature type="sequence conflict" description="In Ref. 3; CAH18413." evidence="3" ref="3">
    <original>S</original>
    <variation>P</variation>
    <location>
        <position position="16"/>
    </location>
</feature>
<feature type="sequence conflict" description="In Ref. 6; AAH67819." evidence="3" ref="6">
    <original>P</original>
    <variation>H</variation>
    <location>
        <position position="52"/>
    </location>
</feature>
<feature type="sequence conflict" description="In Ref. 6; AAH67819." evidence="3" ref="6">
    <original>R</original>
    <variation>H</variation>
    <location>
        <position position="64"/>
    </location>
</feature>
<feature type="sequence conflict" description="In Ref. 6; AAH67819." evidence="3" ref="6">
    <original>R</original>
    <variation>Q</variation>
    <location>
        <position position="125"/>
    </location>
</feature>
<feature type="sequence conflict" description="In Ref. 3; CAH18413." evidence="3" ref="3">
    <original>A</original>
    <variation>T</variation>
    <location>
        <position position="180"/>
    </location>
</feature>
<name>FA156_HUMAN</name>
<protein>
    <recommendedName>
        <fullName>Protein FAM156A/FAM156B</fullName>
    </recommendedName>
    <alternativeName>
        <fullName>Transmembrane protein 29/29B</fullName>
    </alternativeName>
</protein>
<comment type="interaction">
    <interactant intactId="EBI-749727">
        <id>Q8NDB6</id>
    </interactant>
    <interactant intactId="EBI-747353">
        <id>Q8WXE1</id>
        <label>ATRIP</label>
    </interactant>
    <organismsDiffer>false</organismsDiffer>
    <experiments>3</experiments>
</comment>
<comment type="interaction">
    <interactant intactId="EBI-749727">
        <id>Q8NDB6</id>
    </interactant>
    <interactant intactId="EBI-739773">
        <id>Q9BSW2</id>
        <label>CRACR2A</label>
    </interactant>
    <organismsDiffer>false</organismsDiffer>
    <experiments>3</experiments>
</comment>
<comment type="interaction">
    <interactant intactId="EBI-749727">
        <id>Q8NDB6</id>
    </interactant>
    <interactant intactId="EBI-448202">
        <id>O95257</id>
        <label>GADD45G</label>
    </interactant>
    <organismsDiffer>false</organismsDiffer>
    <experiments>3</experiments>
</comment>
<comment type="interaction">
    <interactant intactId="EBI-749727">
        <id>Q8NDB6</id>
    </interactant>
    <interactant intactId="EBI-711613">
        <id>P21673</id>
        <label>SAT1</label>
    </interactant>
    <organismsDiffer>false</organismsDiffer>
    <experiments>3</experiments>
</comment>
<comment type="interaction">
    <interactant intactId="EBI-749727">
        <id>Q8NDB6</id>
    </interactant>
    <interactant intactId="EBI-742397">
        <id>Q8IYF3</id>
        <label>TEX11</label>
    </interactant>
    <organismsDiffer>false</organismsDiffer>
    <experiments>3</experiments>
</comment>
<comment type="interaction">
    <interactant intactId="EBI-749727">
        <id>Q8NDB6</id>
    </interactant>
    <interactant intactId="EBI-1105213">
        <id>Q9UBB9</id>
        <label>TFIP11</label>
    </interactant>
    <organismsDiffer>false</organismsDiffer>
    <experiments>3</experiments>
</comment>
<comment type="subcellular location">
    <subcellularLocation>
        <location evidence="3">Membrane</location>
        <topology evidence="3">Single-pass membrane protein</topology>
    </subcellularLocation>
</comment>
<comment type="sequence caution" evidence="3">
    <conflict type="erroneous initiation">
        <sequence resource="EMBL-CDS" id="AAF24055"/>
    </conflict>
    <text>Truncated N-terminus.</text>
</comment>
<comment type="sequence caution" evidence="3">
    <conflict type="erroneous initiation">
        <sequence resource="EMBL-CDS" id="AAH00867"/>
    </conflict>
    <text>Truncated N-terminus.</text>
</comment>